<evidence type="ECO:0000255" key="1">
    <source>
        <dbReference type="HAMAP-Rule" id="MF_02016"/>
    </source>
</evidence>
<feature type="signal peptide" evidence="1">
    <location>
        <begin position="1"/>
        <end position="30"/>
    </location>
</feature>
<feature type="chain" id="PRO_0000353971" description="Membrane-bound lytic murein transglycosylase F">
    <location>
        <begin position="31"/>
        <end position="514"/>
    </location>
</feature>
<feature type="region of interest" description="Non-LT domain" evidence="1">
    <location>
        <begin position="31"/>
        <end position="269"/>
    </location>
</feature>
<feature type="region of interest" description="LT domain" evidence="1">
    <location>
        <begin position="270"/>
        <end position="514"/>
    </location>
</feature>
<feature type="active site" evidence="1">
    <location>
        <position position="314"/>
    </location>
</feature>
<comment type="function">
    <text evidence="1">Murein-degrading enzyme that degrades murein glycan strands and insoluble, high-molecular weight murein sacculi, with the concomitant formation of a 1,6-anhydromuramoyl product. Lytic transglycosylases (LTs) play an integral role in the metabolism of the peptidoglycan (PG) sacculus. Their lytic action creates space within the PG sacculus to allow for its expansion as well as for the insertion of various structures such as secretion systems and flagella.</text>
</comment>
<comment type="catalytic activity">
    <reaction evidence="1">
        <text>Exolytic cleavage of the (1-&gt;4)-beta-glycosidic linkage between N-acetylmuramic acid (MurNAc) and N-acetylglucosamine (GlcNAc) residues in peptidoglycan, from either the reducing or the non-reducing ends of the peptidoglycan chains, with concomitant formation of a 1,6-anhydrobond in the MurNAc residue.</text>
        <dbReference type="EC" id="4.2.2.n1"/>
    </reaction>
</comment>
<comment type="subcellular location">
    <subcellularLocation>
        <location>Cell outer membrane</location>
        <topology>Peripheral membrane protein</topology>
    </subcellularLocation>
    <text evidence="1">Attached to the inner leaflet of the outer membrane.</text>
</comment>
<comment type="domain">
    <text evidence="1">The N-terminal domain does not have lytic activity and probably modulates enzymatic activity. The C-terminal domain is the catalytic active domain.</text>
</comment>
<comment type="similarity">
    <text evidence="1">In the N-terminal section; belongs to the bacterial solute-binding protein 3 family.</text>
</comment>
<comment type="similarity">
    <text evidence="1">In the C-terminal section; belongs to the transglycosylase Slt family.</text>
</comment>
<organism>
    <name type="scientific">Salmonella choleraesuis (strain SC-B67)</name>
    <dbReference type="NCBI Taxonomy" id="321314"/>
    <lineage>
        <taxon>Bacteria</taxon>
        <taxon>Pseudomonadati</taxon>
        <taxon>Pseudomonadota</taxon>
        <taxon>Gammaproteobacteria</taxon>
        <taxon>Enterobacterales</taxon>
        <taxon>Enterobacteriaceae</taxon>
        <taxon>Salmonella</taxon>
    </lineage>
</organism>
<proteinExistence type="inferred from homology"/>
<reference key="1">
    <citation type="journal article" date="2005" name="Nucleic Acids Res.">
        <title>The genome sequence of Salmonella enterica serovar Choleraesuis, a highly invasive and resistant zoonotic pathogen.</title>
        <authorList>
            <person name="Chiu C.-H."/>
            <person name="Tang P."/>
            <person name="Chu C."/>
            <person name="Hu S."/>
            <person name="Bao Q."/>
            <person name="Yu J."/>
            <person name="Chou Y.-Y."/>
            <person name="Wang H.-S."/>
            <person name="Lee Y.-S."/>
        </authorList>
    </citation>
    <scope>NUCLEOTIDE SEQUENCE [LARGE SCALE GENOMIC DNA]</scope>
    <source>
        <strain>SC-B67</strain>
    </source>
</reference>
<accession>Q57LE4</accession>
<sequence length="514" mass="58026">MKKLKINYLFIGILTLLLAAALWPSIPWFGKTENHIAAIQARGVLRVSTIDSPLTYSVINGKKYGLDYELAQQFANYLGVKLKVTVRQNISQLFDDLDNGNADLLAAGLVYDSARVKNYQPGPMYYSVSQQLVYRVGQYRPRSLATVNENQLTIAPGHVVVNDLQRLKETKFPDLSWKVDDKKGSTTLLEEVISGKLDYTIADSVAISLFQRVHPELAVALDVTDEQPVTWFSRLDDDNTLSAALLDFFNSINEDGSLARIEEKYLGHGDDFDYVDTRSFLRAVDNVLPELEPLFKKYAKEIDWRLLAAISYQESHWDPLATSSTGVRGLMMLTKNTAQSLGLTDRTDAEQSISGGARYLEDMMAKVPETVPEDERIWFALAAYNMGYAHMLDARSLTVKTKGNPDSWTDVKQRLPLLSQKPYYSKLTYGYARGHEAYAYVENIRKYQISLVGYLQEKEKQEAEAMKLAQDYPAVSPEELNKTPFPLLSFLSQSSGYLTHSPSLLFTPQKKEEK</sequence>
<dbReference type="EC" id="4.2.2.n1" evidence="1"/>
<dbReference type="EMBL" id="AE017220">
    <property type="protein sequence ID" value="AAX66468.1"/>
    <property type="molecule type" value="Genomic_DNA"/>
</dbReference>
<dbReference type="RefSeq" id="WP_001540639.1">
    <property type="nucleotide sequence ID" value="NC_006905.1"/>
</dbReference>
<dbReference type="SMR" id="Q57LE4"/>
<dbReference type="CAZy" id="GH23">
    <property type="family name" value="Glycoside Hydrolase Family 23"/>
</dbReference>
<dbReference type="KEGG" id="sec:SCH_2562"/>
<dbReference type="HOGENOM" id="CLU_027494_0_1_6"/>
<dbReference type="Proteomes" id="UP000000538">
    <property type="component" value="Chromosome"/>
</dbReference>
<dbReference type="GO" id="GO:0009279">
    <property type="term" value="C:cell outer membrane"/>
    <property type="evidence" value="ECO:0007669"/>
    <property type="project" value="UniProtKB-SubCell"/>
</dbReference>
<dbReference type="GO" id="GO:0008933">
    <property type="term" value="F:peptidoglycan lytic transglycosylase activity"/>
    <property type="evidence" value="ECO:0007669"/>
    <property type="project" value="UniProtKB-UniRule"/>
</dbReference>
<dbReference type="GO" id="GO:0016998">
    <property type="term" value="P:cell wall macromolecule catabolic process"/>
    <property type="evidence" value="ECO:0007669"/>
    <property type="project" value="UniProtKB-UniRule"/>
</dbReference>
<dbReference type="GO" id="GO:0071555">
    <property type="term" value="P:cell wall organization"/>
    <property type="evidence" value="ECO:0007669"/>
    <property type="project" value="UniProtKB-KW"/>
</dbReference>
<dbReference type="GO" id="GO:0009253">
    <property type="term" value="P:peptidoglycan catabolic process"/>
    <property type="evidence" value="ECO:0007669"/>
    <property type="project" value="TreeGrafter"/>
</dbReference>
<dbReference type="CDD" id="cd13403">
    <property type="entry name" value="MLTF-like"/>
    <property type="match status" value="1"/>
</dbReference>
<dbReference type="CDD" id="cd01009">
    <property type="entry name" value="PBP2_YfhD_N"/>
    <property type="match status" value="1"/>
</dbReference>
<dbReference type="FunFam" id="1.10.530.10:FF:000003">
    <property type="entry name" value="Membrane-bound lytic murein transglycosylase F"/>
    <property type="match status" value="1"/>
</dbReference>
<dbReference type="FunFam" id="3.40.190.10:FF:000051">
    <property type="entry name" value="Membrane-bound lytic murein transglycosylase F"/>
    <property type="match status" value="1"/>
</dbReference>
<dbReference type="Gene3D" id="1.10.530.10">
    <property type="match status" value="1"/>
</dbReference>
<dbReference type="Gene3D" id="3.40.190.10">
    <property type="entry name" value="Periplasmic binding protein-like II"/>
    <property type="match status" value="2"/>
</dbReference>
<dbReference type="HAMAP" id="MF_02016">
    <property type="entry name" value="MltF"/>
    <property type="match status" value="1"/>
</dbReference>
<dbReference type="InterPro" id="IPR023346">
    <property type="entry name" value="Lysozyme-like_dom_sf"/>
</dbReference>
<dbReference type="InterPro" id="IPR023703">
    <property type="entry name" value="MltF"/>
</dbReference>
<dbReference type="InterPro" id="IPR001638">
    <property type="entry name" value="Solute-binding_3/MltF_N"/>
</dbReference>
<dbReference type="InterPro" id="IPR000189">
    <property type="entry name" value="Transglyc_AS"/>
</dbReference>
<dbReference type="InterPro" id="IPR008258">
    <property type="entry name" value="Transglycosylase_SLT_dom_1"/>
</dbReference>
<dbReference type="NCBIfam" id="NF008112">
    <property type="entry name" value="PRK10859.1"/>
    <property type="match status" value="1"/>
</dbReference>
<dbReference type="PANTHER" id="PTHR35936">
    <property type="entry name" value="MEMBRANE-BOUND LYTIC MUREIN TRANSGLYCOSYLASE F"/>
    <property type="match status" value="1"/>
</dbReference>
<dbReference type="PANTHER" id="PTHR35936:SF32">
    <property type="entry name" value="MEMBRANE-BOUND LYTIC MUREIN TRANSGLYCOSYLASE F"/>
    <property type="match status" value="1"/>
</dbReference>
<dbReference type="Pfam" id="PF00497">
    <property type="entry name" value="SBP_bac_3"/>
    <property type="match status" value="1"/>
</dbReference>
<dbReference type="Pfam" id="PF01464">
    <property type="entry name" value="SLT"/>
    <property type="match status" value="1"/>
</dbReference>
<dbReference type="SMART" id="SM00062">
    <property type="entry name" value="PBPb"/>
    <property type="match status" value="1"/>
</dbReference>
<dbReference type="SUPFAM" id="SSF53955">
    <property type="entry name" value="Lysozyme-like"/>
    <property type="match status" value="1"/>
</dbReference>
<dbReference type="SUPFAM" id="SSF53850">
    <property type="entry name" value="Periplasmic binding protein-like II"/>
    <property type="match status" value="1"/>
</dbReference>
<dbReference type="PROSITE" id="PS00922">
    <property type="entry name" value="TRANSGLYCOSYLASE"/>
    <property type="match status" value="1"/>
</dbReference>
<keyword id="KW-0998">Cell outer membrane</keyword>
<keyword id="KW-0961">Cell wall biogenesis/degradation</keyword>
<keyword id="KW-0456">Lyase</keyword>
<keyword id="KW-0472">Membrane</keyword>
<keyword id="KW-0732">Signal</keyword>
<name>MLTF_SALCH</name>
<gene>
    <name evidence="1" type="primary">mltF</name>
    <name type="ordered locus">SCH_2562</name>
</gene>
<protein>
    <recommendedName>
        <fullName evidence="1">Membrane-bound lytic murein transglycosylase F</fullName>
        <ecNumber evidence="1">4.2.2.n1</ecNumber>
    </recommendedName>
    <alternativeName>
        <fullName evidence="1">Murein lyase F</fullName>
    </alternativeName>
</protein>